<protein>
    <recommendedName>
        <fullName evidence="10">Ribosome quality control complex subunit NEMF</fullName>
    </recommendedName>
    <alternativeName>
        <fullName evidence="11">Nuclear export mediator factor</fullName>
    </alternativeName>
</protein>
<reference key="1">
    <citation type="journal article" date="2005" name="Science">
        <title>The transcriptional landscape of the mammalian genome.</title>
        <authorList>
            <person name="Carninci P."/>
            <person name="Kasukawa T."/>
            <person name="Katayama S."/>
            <person name="Gough J."/>
            <person name="Frith M.C."/>
            <person name="Maeda N."/>
            <person name="Oyama R."/>
            <person name="Ravasi T."/>
            <person name="Lenhard B."/>
            <person name="Wells C."/>
            <person name="Kodzius R."/>
            <person name="Shimokawa K."/>
            <person name="Bajic V.B."/>
            <person name="Brenner S.E."/>
            <person name="Batalov S."/>
            <person name="Forrest A.R."/>
            <person name="Zavolan M."/>
            <person name="Davis M.J."/>
            <person name="Wilming L.G."/>
            <person name="Aidinis V."/>
            <person name="Allen J.E."/>
            <person name="Ambesi-Impiombato A."/>
            <person name="Apweiler R."/>
            <person name="Aturaliya R.N."/>
            <person name="Bailey T.L."/>
            <person name="Bansal M."/>
            <person name="Baxter L."/>
            <person name="Beisel K.W."/>
            <person name="Bersano T."/>
            <person name="Bono H."/>
            <person name="Chalk A.M."/>
            <person name="Chiu K.P."/>
            <person name="Choudhary V."/>
            <person name="Christoffels A."/>
            <person name="Clutterbuck D.R."/>
            <person name="Crowe M.L."/>
            <person name="Dalla E."/>
            <person name="Dalrymple B.P."/>
            <person name="de Bono B."/>
            <person name="Della Gatta G."/>
            <person name="di Bernardo D."/>
            <person name="Down T."/>
            <person name="Engstrom P."/>
            <person name="Fagiolini M."/>
            <person name="Faulkner G."/>
            <person name="Fletcher C.F."/>
            <person name="Fukushima T."/>
            <person name="Furuno M."/>
            <person name="Futaki S."/>
            <person name="Gariboldi M."/>
            <person name="Georgii-Hemming P."/>
            <person name="Gingeras T.R."/>
            <person name="Gojobori T."/>
            <person name="Green R.E."/>
            <person name="Gustincich S."/>
            <person name="Harbers M."/>
            <person name="Hayashi Y."/>
            <person name="Hensch T.K."/>
            <person name="Hirokawa N."/>
            <person name="Hill D."/>
            <person name="Huminiecki L."/>
            <person name="Iacono M."/>
            <person name="Ikeo K."/>
            <person name="Iwama A."/>
            <person name="Ishikawa T."/>
            <person name="Jakt M."/>
            <person name="Kanapin A."/>
            <person name="Katoh M."/>
            <person name="Kawasawa Y."/>
            <person name="Kelso J."/>
            <person name="Kitamura H."/>
            <person name="Kitano H."/>
            <person name="Kollias G."/>
            <person name="Krishnan S.P."/>
            <person name="Kruger A."/>
            <person name="Kummerfeld S.K."/>
            <person name="Kurochkin I.V."/>
            <person name="Lareau L.F."/>
            <person name="Lazarevic D."/>
            <person name="Lipovich L."/>
            <person name="Liu J."/>
            <person name="Liuni S."/>
            <person name="McWilliam S."/>
            <person name="Madan Babu M."/>
            <person name="Madera M."/>
            <person name="Marchionni L."/>
            <person name="Matsuda H."/>
            <person name="Matsuzawa S."/>
            <person name="Miki H."/>
            <person name="Mignone F."/>
            <person name="Miyake S."/>
            <person name="Morris K."/>
            <person name="Mottagui-Tabar S."/>
            <person name="Mulder N."/>
            <person name="Nakano N."/>
            <person name="Nakauchi H."/>
            <person name="Ng P."/>
            <person name="Nilsson R."/>
            <person name="Nishiguchi S."/>
            <person name="Nishikawa S."/>
            <person name="Nori F."/>
            <person name="Ohara O."/>
            <person name="Okazaki Y."/>
            <person name="Orlando V."/>
            <person name="Pang K.C."/>
            <person name="Pavan W.J."/>
            <person name="Pavesi G."/>
            <person name="Pesole G."/>
            <person name="Petrovsky N."/>
            <person name="Piazza S."/>
            <person name="Reed J."/>
            <person name="Reid J.F."/>
            <person name="Ring B.Z."/>
            <person name="Ringwald M."/>
            <person name="Rost B."/>
            <person name="Ruan Y."/>
            <person name="Salzberg S.L."/>
            <person name="Sandelin A."/>
            <person name="Schneider C."/>
            <person name="Schoenbach C."/>
            <person name="Sekiguchi K."/>
            <person name="Semple C.A."/>
            <person name="Seno S."/>
            <person name="Sessa L."/>
            <person name="Sheng Y."/>
            <person name="Shibata Y."/>
            <person name="Shimada H."/>
            <person name="Shimada K."/>
            <person name="Silva D."/>
            <person name="Sinclair B."/>
            <person name="Sperling S."/>
            <person name="Stupka E."/>
            <person name="Sugiura K."/>
            <person name="Sultana R."/>
            <person name="Takenaka Y."/>
            <person name="Taki K."/>
            <person name="Tammoja K."/>
            <person name="Tan S.L."/>
            <person name="Tang S."/>
            <person name="Taylor M.S."/>
            <person name="Tegner J."/>
            <person name="Teichmann S.A."/>
            <person name="Ueda H.R."/>
            <person name="van Nimwegen E."/>
            <person name="Verardo R."/>
            <person name="Wei C.L."/>
            <person name="Yagi K."/>
            <person name="Yamanishi H."/>
            <person name="Zabarovsky E."/>
            <person name="Zhu S."/>
            <person name="Zimmer A."/>
            <person name="Hide W."/>
            <person name="Bult C."/>
            <person name="Grimmond S.M."/>
            <person name="Teasdale R.D."/>
            <person name="Liu E.T."/>
            <person name="Brusic V."/>
            <person name="Quackenbush J."/>
            <person name="Wahlestedt C."/>
            <person name="Mattick J.S."/>
            <person name="Hume D.A."/>
            <person name="Kai C."/>
            <person name="Sasaki D."/>
            <person name="Tomaru Y."/>
            <person name="Fukuda S."/>
            <person name="Kanamori-Katayama M."/>
            <person name="Suzuki M."/>
            <person name="Aoki J."/>
            <person name="Arakawa T."/>
            <person name="Iida J."/>
            <person name="Imamura K."/>
            <person name="Itoh M."/>
            <person name="Kato T."/>
            <person name="Kawaji H."/>
            <person name="Kawagashira N."/>
            <person name="Kawashima T."/>
            <person name="Kojima M."/>
            <person name="Kondo S."/>
            <person name="Konno H."/>
            <person name="Nakano K."/>
            <person name="Ninomiya N."/>
            <person name="Nishio T."/>
            <person name="Okada M."/>
            <person name="Plessy C."/>
            <person name="Shibata K."/>
            <person name="Shiraki T."/>
            <person name="Suzuki S."/>
            <person name="Tagami M."/>
            <person name="Waki K."/>
            <person name="Watahiki A."/>
            <person name="Okamura-Oho Y."/>
            <person name="Suzuki H."/>
            <person name="Kawai J."/>
            <person name="Hayashizaki Y."/>
        </authorList>
    </citation>
    <scope>NUCLEOTIDE SEQUENCE [LARGE SCALE MRNA] (ISOFORMS 1; 3 AND 4)</scope>
    <scope>NUCLEOTIDE SEQUENCE [LARGE SCALE MRNA] OF 1-438 (ISOFORMS 1/2/3)</scope>
    <source>
        <strain>C57BL/6J</strain>
        <strain>NOD</strain>
        <tissue>Cerebellum</tissue>
        <tissue>Embryo</tissue>
        <tissue>Olfactory bulb</tissue>
        <tissue>Spinal cord</tissue>
        <tissue>Spleen</tissue>
        <tissue>Sympathetic ganglion</tissue>
        <tissue>Testis</tissue>
        <tissue>Thymus</tissue>
    </source>
</reference>
<reference key="2">
    <citation type="journal article" date="2004" name="Genome Res.">
        <title>The status, quality, and expansion of the NIH full-length cDNA project: the Mammalian Gene Collection (MGC).</title>
        <authorList>
            <consortium name="The MGC Project Team"/>
        </authorList>
    </citation>
    <scope>NUCLEOTIDE SEQUENCE [LARGE SCALE MRNA] (ISOFORM 4)</scope>
    <scope>NUCLEOTIDE SEQUENCE [LARGE SCALE MRNA] OF 687-1064 (ISOFORM 2)</scope>
    <scope>NUCLEOTIDE SEQUENCE [LARGE SCALE MRNA] OF 1-443 AND 855-1064 (ISOFORM 1)</scope>
    <source>
        <strain>C57BL/6J</strain>
        <strain>NMRI</strain>
        <tissue>Embryo</tissue>
        <tissue>Mammary tumor</tissue>
        <tissue>Retina</tissue>
    </source>
</reference>
<reference key="3">
    <citation type="journal article" date="2007" name="Proc. Natl. Acad. Sci. U.S.A.">
        <title>Large-scale phosphorylation analysis of mouse liver.</title>
        <authorList>
            <person name="Villen J."/>
            <person name="Beausoleil S.A."/>
            <person name="Gerber S.A."/>
            <person name="Gygi S.P."/>
        </authorList>
    </citation>
    <scope>PHOSPHORYLATION [LARGE SCALE ANALYSIS] AT SER-417</scope>
    <scope>IDENTIFICATION BY MASS SPECTROMETRY [LARGE SCALE ANALYSIS]</scope>
    <source>
        <tissue>Liver</tissue>
    </source>
</reference>
<reference key="4">
    <citation type="journal article" date="2010" name="Cell">
        <title>A tissue-specific atlas of mouse protein phosphorylation and expression.</title>
        <authorList>
            <person name="Huttlin E.L."/>
            <person name="Jedrychowski M.P."/>
            <person name="Elias J.E."/>
            <person name="Goswami T."/>
            <person name="Rad R."/>
            <person name="Beausoleil S.A."/>
            <person name="Villen J."/>
            <person name="Haas W."/>
            <person name="Sowa M.E."/>
            <person name="Gygi S.P."/>
        </authorList>
    </citation>
    <scope>PHOSPHORYLATION [LARGE SCALE ANALYSIS] AT SER-417 AND SER-737</scope>
    <scope>IDENTIFICATION BY MASS SPECTROMETRY [LARGE SCALE ANALYSIS]</scope>
    <source>
        <tissue>Brain</tissue>
        <tissue>Brown adipose tissue</tissue>
        <tissue>Heart</tissue>
        <tissue>Kidney</tissue>
        <tissue>Liver</tissue>
        <tissue>Lung</tissue>
        <tissue>Pancreas</tissue>
        <tissue>Spleen</tissue>
        <tissue>Testis</tissue>
    </source>
</reference>
<reference key="5">
    <citation type="journal article" date="2020" name="Nat. Commun.">
        <title>NEMF mutations that impair ribosome-associated quality control are associated with neuromuscular disease.</title>
        <authorList>
            <person name="Martin P.B."/>
            <person name="Kigoshi-Tansho Y."/>
            <person name="Sher R.B."/>
            <person name="Ravenscroft G."/>
            <person name="Stauffer J.E."/>
            <person name="Kumar R."/>
            <person name="Yonashiro R."/>
            <person name="Mueller T."/>
            <person name="Griffith C."/>
            <person name="Allen W."/>
            <person name="Pehlivan D."/>
            <person name="Harel T."/>
            <person name="Zenker M."/>
            <person name="Howting D."/>
            <person name="Schanze D."/>
            <person name="Faqeih E.A."/>
            <person name="Almontashiri N.A.M."/>
            <person name="Maroofian R."/>
            <person name="Houlden H."/>
            <person name="Mazaheri N."/>
            <person name="Galehdari H."/>
            <person name="Douglas G."/>
            <person name="Posey J.E."/>
            <person name="Ryan M."/>
            <person name="Lupski J.R."/>
            <person name="Laing N.G."/>
            <person name="Joazeiro C.A.P."/>
            <person name="Cox G.A."/>
        </authorList>
    </citation>
    <scope>MUTAGENESIS OF ARG-86; 106-ASP--LYS-1064 AND ARG-487</scope>
</reference>
<reference key="6">
    <citation type="journal article" date="2021" name="Cell Rep.">
        <title>Failure to degrade CAT-tailed proteins disrupts neuronal morphogenesis and cell survival.</title>
        <authorList>
            <person name="Udagawa T."/>
            <person name="Seki M."/>
            <person name="Okuyama T."/>
            <person name="Adachi S."/>
            <person name="Natsume T."/>
            <person name="Noguchi T."/>
            <person name="Matsuzawa A."/>
            <person name="Inada T."/>
        </authorList>
    </citation>
    <scope>FUNCTION</scope>
</reference>
<accession>Q8CCP0</accession>
<accession>Q3TAS9</accession>
<accession>Q3UF46</accession>
<accession>Q66JX6</accession>
<accession>Q8C9R6</accession>
<accession>Q8CA65</accession>
<accession>Q8JZT9</accession>
<accession>Q8R072</accession>
<accession>Q9CW30</accession>
<accession>Q9CYB8</accession>
<accession>Q9D4A9</accession>
<organism>
    <name type="scientific">Mus musculus</name>
    <name type="common">Mouse</name>
    <dbReference type="NCBI Taxonomy" id="10090"/>
    <lineage>
        <taxon>Eukaryota</taxon>
        <taxon>Metazoa</taxon>
        <taxon>Chordata</taxon>
        <taxon>Craniata</taxon>
        <taxon>Vertebrata</taxon>
        <taxon>Euteleostomi</taxon>
        <taxon>Mammalia</taxon>
        <taxon>Eutheria</taxon>
        <taxon>Euarchontoglires</taxon>
        <taxon>Glires</taxon>
        <taxon>Rodentia</taxon>
        <taxon>Myomorpha</taxon>
        <taxon>Muroidea</taxon>
        <taxon>Muridae</taxon>
        <taxon>Murinae</taxon>
        <taxon>Mus</taxon>
        <taxon>Mus</taxon>
    </lineage>
</organism>
<comment type="function">
    <text evidence="1 2 6">Key component of the ribosome quality control complex (RQC), a ribosome-associated complex that mediates the extraction of incompletely synthesized nascent chains from stalled ribosomes as well as their ubiquitin-mediated proteasomal degradation (PubMed:33406423). Thereby, frees 60S subunit ribosomes from the stalled translation complex and prevents the accumulation of nascent polypeptide chains that are potentially toxic for the cell (PubMed:33406423). Within the RQC complex, NEMF specifically binds stalled 60S ribosomal subunits by recognizing an exposed, nascent chain-conjugated tRNA moiety and promotes the recruitment of LTN1 to stalled 60S subunits (By similarity). Following binding to stalled 60S ribosomal subunits, NEMF mediates CAT tailing by recruiting alanine-charged tRNA to the A-site and directing the elongation of stalled nascent chains independently of mRNA or 40S subunits, leading to non-templated C-terminal alanine extensions (CAT tails) (PubMed:33406423). Mainly recruits alanine-charged tRNAs, but can also other amino acid-charged tRNAs (By similarity). CAT tailing is required to promote ubiquitination of stalled nascent chains by different E3 ubiquitin-protein ligases (By similarity). In the canonical RQC pathway (RQC-L), CAT tailing facilitates LTN1-dependent ubiquitination by exposing lysine residues that would otherwise remain buried in the ribosomal exit tunnel (By similarity). In the alternative RQC pathway (RQC-C) CAT tailing creates an C-degron mainly composed of alanine that is recognized by the CRL2(KLHDC10) and RCHY1/PIRH2 E3 ligases, leading to ubiquitination and degradation of stalled nascent chains (By similarity). NEMF may also indirectly play a role in nuclear export (By similarity).</text>
</comment>
<comment type="subunit">
    <text evidence="1 2">Component of the ribosome quality control complex (RQC), composed of the E3 ubiquitin ligase LTN1, TCF25 and NEMF associated with the 60S ribosomal subunit (By similarity). The complex probably also contains VCP/p97 and its ubiquitin-binding cofactors (By similarity). Interacts (via its N-terminus) with XPO1 (By similarity).</text>
</comment>
<comment type="subcellular location">
    <subcellularLocation>
        <location evidence="1">Cytoplasm</location>
        <location evidence="1">Cytosol</location>
    </subcellularLocation>
    <subcellularLocation>
        <location evidence="1">Nucleus</location>
    </subcellularLocation>
</comment>
<comment type="alternative products">
    <event type="alternative splicing"/>
    <isoform>
        <id>Q8CCP0-1</id>
        <name>1</name>
        <sequence type="displayed"/>
    </isoform>
    <isoform>
        <id>Q8CCP0-2</id>
        <name>2</name>
        <sequence type="described" ref="VSP_008397 VSP_008398"/>
    </isoform>
    <isoform>
        <id>Q8CCP0-3</id>
        <name>3</name>
        <sequence type="described" ref="VSP_010465 VSP_010466"/>
    </isoform>
    <isoform>
        <id>Q8CCP0-4</id>
        <name>4</name>
        <sequence type="described" ref="VSP_010463 VSP_010464"/>
    </isoform>
</comment>
<comment type="miscellaneous">
    <molecule>Isoform 2</molecule>
    <text evidence="10">Due to intron retention.</text>
</comment>
<comment type="similarity">
    <text evidence="10">Belongs to the NEMF family.</text>
</comment>
<comment type="sequence caution" evidence="10">
    <conflict type="erroneous initiation">
        <sequence resource="EMBL-CDS" id="AAH27272"/>
    </conflict>
    <text>Truncated N-terminus.</text>
</comment>
<comment type="sequence caution" evidence="10">
    <conflict type="erroneous initiation">
        <sequence resource="EMBL-CDS" id="AAH53488"/>
    </conflict>
    <text>Truncated N-terminus.</text>
</comment>
<comment type="sequence caution" evidence="10">
    <conflict type="frameshift">
        <sequence resource="EMBL-CDS" id="AAH53488"/>
    </conflict>
</comment>
<comment type="sequence caution" evidence="10">
    <conflict type="erroneous initiation">
        <sequence resource="EMBL-CDS" id="BAB30366"/>
    </conflict>
    <text>Truncated N-terminus.</text>
</comment>
<comment type="sequence caution" evidence="10">
    <conflict type="frameshift">
        <sequence resource="EMBL-CDS" id="BAB30366"/>
    </conflict>
</comment>
<comment type="sequence caution" evidence="10">
    <conflict type="erroneous initiation">
        <sequence resource="EMBL-CDS" id="BAC27849"/>
    </conflict>
    <text>Truncated N-terminus.</text>
</comment>
<comment type="sequence caution" evidence="10">
    <conflict type="miscellaneous discrepancy">
        <sequence resource="EMBL-CDS" id="BAC27849"/>
    </conflict>
    <text>Intron retention.</text>
</comment>
<name>NEMF_MOUSE</name>
<feature type="chain" id="PRO_0000097643" description="Ribosome quality control complex subunit NEMF">
    <location>
        <begin position="1"/>
        <end position="1064"/>
    </location>
</feature>
<feature type="region of interest" description="Disordered" evidence="4">
    <location>
        <begin position="420"/>
        <end position="451"/>
    </location>
</feature>
<feature type="region of interest" description="Disordered" evidence="4">
    <location>
        <begin position="694"/>
        <end position="718"/>
    </location>
</feature>
<feature type="region of interest" description="Disordered" evidence="4">
    <location>
        <begin position="731"/>
        <end position="973"/>
    </location>
</feature>
<feature type="coiled-coil region" evidence="3">
    <location>
        <begin position="296"/>
        <end position="359"/>
    </location>
</feature>
<feature type="coiled-coil region" evidence="3">
    <location>
        <begin position="481"/>
        <end position="512"/>
    </location>
</feature>
<feature type="coiled-coil region" evidence="3">
    <location>
        <begin position="858"/>
        <end position="882"/>
    </location>
</feature>
<feature type="compositionally biased region" description="Basic residues" evidence="4">
    <location>
        <begin position="438"/>
        <end position="447"/>
    </location>
</feature>
<feature type="compositionally biased region" description="Acidic residues" evidence="4">
    <location>
        <begin position="694"/>
        <end position="707"/>
    </location>
</feature>
<feature type="compositionally biased region" description="Basic and acidic residues" evidence="4">
    <location>
        <begin position="731"/>
        <end position="756"/>
    </location>
</feature>
<feature type="compositionally biased region" description="Polar residues" evidence="4">
    <location>
        <begin position="771"/>
        <end position="781"/>
    </location>
</feature>
<feature type="compositionally biased region" description="Basic and acidic residues" evidence="4">
    <location>
        <begin position="828"/>
        <end position="839"/>
    </location>
</feature>
<feature type="compositionally biased region" description="Basic residues" evidence="4">
    <location>
        <begin position="859"/>
        <end position="870"/>
    </location>
</feature>
<feature type="compositionally biased region" description="Basic and acidic residues" evidence="4">
    <location>
        <begin position="947"/>
        <end position="959"/>
    </location>
</feature>
<feature type="compositionally biased region" description="Polar residues" evidence="4">
    <location>
        <begin position="960"/>
        <end position="973"/>
    </location>
</feature>
<feature type="modified residue" description="Phosphothreonine" evidence="1">
    <location>
        <position position="7"/>
    </location>
</feature>
<feature type="modified residue" description="Phosphoserine" evidence="12 13">
    <location>
        <position position="417"/>
    </location>
</feature>
<feature type="modified residue" description="Phosphoserine" evidence="13">
    <location>
        <position position="737"/>
    </location>
</feature>
<feature type="splice variant" id="VSP_010463" description="In isoform 4." evidence="7 8">
    <original>NPYL</original>
    <variation>GGRW</variation>
    <location>
        <begin position="412"/>
        <end position="415"/>
    </location>
</feature>
<feature type="splice variant" id="VSP_010464" description="In isoform 4." evidence="7 8">
    <location>
        <begin position="416"/>
        <end position="1064"/>
    </location>
</feature>
<feature type="splice variant" id="VSP_010465" description="In isoform 3." evidence="8">
    <original>KKNF</original>
    <variation>NSLT</variation>
    <location>
        <begin position="638"/>
        <end position="641"/>
    </location>
</feature>
<feature type="splice variant" id="VSP_010466" description="In isoform 3." evidence="8">
    <location>
        <begin position="642"/>
        <end position="1064"/>
    </location>
</feature>
<feature type="splice variant" id="VSP_008397" description="In isoform 2." evidence="7">
    <original>SAGS</original>
    <variation>VSII</variation>
    <location>
        <begin position="889"/>
        <end position="892"/>
    </location>
</feature>
<feature type="splice variant" id="VSP_008398" description="In isoform 2." evidence="7">
    <location>
        <begin position="893"/>
        <end position="1064"/>
    </location>
</feature>
<feature type="mutagenesis site" description="Induces an age-dependent neurodegenerative phenotype." evidence="5">
    <original>R</original>
    <variation>S</variation>
    <location>
        <position position="86"/>
    </location>
</feature>
<feature type="mutagenesis site" description="Induces an age-dependent neurodegenerative phenotype." evidence="5">
    <location>
        <begin position="106"/>
        <end position="1064"/>
    </location>
</feature>
<feature type="mutagenesis site" description="Induces an age-dependent neurodegenerative phenotype." evidence="5">
    <original>R</original>
    <variation>G</variation>
    <location>
        <position position="487"/>
    </location>
</feature>
<feature type="sequence conflict" description="In Ref. 1; BAE42589." evidence="10" ref="1">
    <original>S</original>
    <variation>G</variation>
    <location>
        <position position="84"/>
    </location>
</feature>
<feature type="sequence conflict" description="In Ref. 1; BAB23886." evidence="10" ref="1">
    <original>A</original>
    <variation>P</variation>
    <location>
        <position position="295"/>
    </location>
</feature>
<feature type="sequence conflict" description="In Ref. 1; BAB30959." evidence="10" ref="1">
    <original>H</original>
    <variation>Q</variation>
    <location>
        <position position="405"/>
    </location>
</feature>
<feature type="sequence conflict" description="In Ref. 1; BAB23886." evidence="10" ref="1">
    <original>L</original>
    <variation>S</variation>
    <location>
        <position position="416"/>
    </location>
</feature>
<feature type="sequence conflict" description="In Ref. 2; AAH80716." evidence="10" ref="2">
    <original>Q</original>
    <variation>K</variation>
    <location>
        <position position="443"/>
    </location>
</feature>
<feature type="sequence conflict" description="In Ref. 1; BAB30366." evidence="10" ref="1">
    <original>E</original>
    <variation>G</variation>
    <location>
        <position position="789"/>
    </location>
</feature>
<feature type="sequence conflict" description="In Ref. 2; AAH53488." evidence="10" ref="2">
    <original>K</original>
    <variation>R</variation>
    <location>
        <position position="873"/>
    </location>
</feature>
<feature type="sequence conflict" description="In Ref. 2; AAH53488." evidence="10" ref="2">
    <original>H</original>
    <variation>Y</variation>
    <location>
        <position position="1023"/>
    </location>
</feature>
<proteinExistence type="evidence at protein level"/>
<gene>
    <name evidence="9 11" type="primary">Nemf</name>
</gene>
<sequence>MKSRFSTVDLRAVLAELNASLLGMRVNNVYDVDNKTYLIRLQKPDFKATLLLESGIRIHTTEFEWPKNMMPSSFAMKCRKHLKSRRLVSAKQLGVDRIVDFQFGSDEAAYHLIIELYDRGNIVLTDYEYLILNILRFRTDEADDVKFAVRERYPIDHARAAEPLLTLERLTEVIAAAPKGEVLKRVLNPLLPYGPALIEHCLIESGFSGNAKVDEKLESKDIEKILVCVQRAEDYLRKTSNFNGKGYIIQKREAKPSLDADKPAEDILTYEEFHPFLFSQHLQCPYIEFESFDKAVDEFYSKIEGQKIDLKALQQEKQALKKLDNVRKDHENRLEALQQAQEIDKLKGELIEMNLQIVDRAIQVVRSALANQIDWTEIGVIVKEAQAQGDPVACAIKELKLQTNHVTMLLRNPYLLSEEEDGDGDASIENSDAEAPKGKKKKQKNKQLQKPQKNKPLLVDVDLSLSAYANAKKYYDHKRYAAKKTQRTVEAAEKAFKSAEKKTKQTLKEVQTVTSIQKARKVYWFEKFLWFISSENYLIIGGRDQQQNEIIVKRYLTPGDIYVHADLHGATSCVIKNPTGEPIPPRTLTEAGTMALCYSAAWDARVITSAWWVYHHQVSKTAPTGEYLTTGSFMIRGKKNFLPPSYLMMGFSFLFKVDESCVWRHRGERKVRVQDEDMETLTSCTSELMAEEMEQLEGGDSSEEETEELHGMPGDVELMTQVDQEDIAVHSGRDELSSEDGEAKAVTKDQEPIGEMKEEEEDTFEYPDTTIDLSHLQSQRPLQKLAPREESLNSNDSKSQGRRHLSAKERREMKKKKLPCESGDLEVIEEKDKERESAVHTEAYQNTSKNVAAGQPMKRGQKSKMKKMKEKYKDQDDEDRELIMKLLASAGSNKEEKGKKGKKGKPKDEPVKKPPQKPRGGQRVLDVVKEPPSLQVLAHDLQDLAVDDPHDDKEEHDLDQQGNEENLFDSLTGQPHPEDVLMFAIPICAPYTIMTNYKYKVKLTPGVQKKGKAAKTALNSFMHSKEATAREKDLFRSVKDTDLSRNIPGKVKVSAPNLLHVKRK</sequence>
<evidence type="ECO:0000250" key="1">
    <source>
        <dbReference type="UniProtKB" id="O60524"/>
    </source>
</evidence>
<evidence type="ECO:0000250" key="2">
    <source>
        <dbReference type="UniProtKB" id="Q12532"/>
    </source>
</evidence>
<evidence type="ECO:0000255" key="3"/>
<evidence type="ECO:0000256" key="4">
    <source>
        <dbReference type="SAM" id="MobiDB-lite"/>
    </source>
</evidence>
<evidence type="ECO:0000269" key="5">
    <source>
    </source>
</evidence>
<evidence type="ECO:0000269" key="6">
    <source>
    </source>
</evidence>
<evidence type="ECO:0000303" key="7">
    <source>
    </source>
</evidence>
<evidence type="ECO:0000303" key="8">
    <source>
    </source>
</evidence>
<evidence type="ECO:0000303" key="9">
    <source>
    </source>
</evidence>
<evidence type="ECO:0000305" key="10"/>
<evidence type="ECO:0000312" key="11">
    <source>
        <dbReference type="MGI" id="MGI:1918305"/>
    </source>
</evidence>
<evidence type="ECO:0007744" key="12">
    <source>
    </source>
</evidence>
<evidence type="ECO:0007744" key="13">
    <source>
    </source>
</evidence>
<dbReference type="EMBL" id="AK005212">
    <property type="protein sequence ID" value="BAB23886.1"/>
    <property type="molecule type" value="mRNA"/>
</dbReference>
<dbReference type="EMBL" id="AK016662">
    <property type="protein sequence ID" value="BAB30366.1"/>
    <property type="status" value="ALT_FRAME"/>
    <property type="molecule type" value="mRNA"/>
</dbReference>
<dbReference type="EMBL" id="AK017826">
    <property type="protein sequence ID" value="BAB30959.1"/>
    <property type="molecule type" value="mRNA"/>
</dbReference>
<dbReference type="EMBL" id="AK032388">
    <property type="protein sequence ID" value="BAC27849.1"/>
    <property type="status" value="ALT_SEQ"/>
    <property type="molecule type" value="mRNA"/>
</dbReference>
<dbReference type="EMBL" id="AK039497">
    <property type="protein sequence ID" value="BAC30369.1"/>
    <property type="molecule type" value="mRNA"/>
</dbReference>
<dbReference type="EMBL" id="AK041458">
    <property type="protein sequence ID" value="BAC30950.1"/>
    <property type="molecule type" value="mRNA"/>
</dbReference>
<dbReference type="EMBL" id="AK089000">
    <property type="status" value="NOT_ANNOTATED_CDS"/>
    <property type="molecule type" value="mRNA"/>
</dbReference>
<dbReference type="EMBL" id="AK149005">
    <property type="protein sequence ID" value="BAE28715.1"/>
    <property type="molecule type" value="mRNA"/>
</dbReference>
<dbReference type="EMBL" id="AK171652">
    <property type="protein sequence ID" value="BAE42589.1"/>
    <property type="molecule type" value="mRNA"/>
</dbReference>
<dbReference type="EMBL" id="BC027272">
    <property type="protein sequence ID" value="AAH27272.1"/>
    <property type="status" value="ALT_INIT"/>
    <property type="molecule type" value="mRNA"/>
</dbReference>
<dbReference type="EMBL" id="BC037106">
    <property type="protein sequence ID" value="AAH37106.2"/>
    <property type="molecule type" value="mRNA"/>
</dbReference>
<dbReference type="EMBL" id="BC053488">
    <property type="protein sequence ID" value="AAH53488.2"/>
    <property type="status" value="ALT_FRAME"/>
    <property type="molecule type" value="mRNA"/>
</dbReference>
<dbReference type="EMBL" id="BC080716">
    <property type="protein sequence ID" value="AAH80716.1"/>
    <property type="molecule type" value="mRNA"/>
</dbReference>
<dbReference type="CCDS" id="CCDS25951.1">
    <molecule id="Q8CCP0-1"/>
</dbReference>
<dbReference type="RefSeq" id="NP_079717.2">
    <molecule id="Q8CCP0-1"/>
    <property type="nucleotide sequence ID" value="NM_025441.3"/>
</dbReference>
<dbReference type="SMR" id="Q8CCP0"/>
<dbReference type="BioGRID" id="211322">
    <property type="interactions" value="2"/>
</dbReference>
<dbReference type="FunCoup" id="Q8CCP0">
    <property type="interactions" value="3057"/>
</dbReference>
<dbReference type="IntAct" id="Q8CCP0">
    <property type="interactions" value="2"/>
</dbReference>
<dbReference type="MINT" id="Q8CCP0"/>
<dbReference type="STRING" id="10090.ENSMUSP00000021368"/>
<dbReference type="ChEMBL" id="CHEMBL4879489"/>
<dbReference type="iPTMnet" id="Q8CCP0"/>
<dbReference type="PhosphoSitePlus" id="Q8CCP0"/>
<dbReference type="SwissPalm" id="Q8CCP0"/>
<dbReference type="jPOST" id="Q8CCP0"/>
<dbReference type="PaxDb" id="10090-ENSMUSP00000021368"/>
<dbReference type="PeptideAtlas" id="Q8CCP0"/>
<dbReference type="ProteomicsDB" id="252882">
    <molecule id="Q8CCP0-1"/>
</dbReference>
<dbReference type="ProteomicsDB" id="252883">
    <molecule id="Q8CCP0-2"/>
</dbReference>
<dbReference type="ProteomicsDB" id="252884">
    <molecule id="Q8CCP0-3"/>
</dbReference>
<dbReference type="ProteomicsDB" id="252885">
    <molecule id="Q8CCP0-4"/>
</dbReference>
<dbReference type="Pumba" id="Q8CCP0"/>
<dbReference type="Antibodypedia" id="140">
    <property type="antibodies" value="213 antibodies from 30 providers"/>
</dbReference>
<dbReference type="DNASU" id="66244"/>
<dbReference type="Ensembl" id="ENSMUST00000021368.10">
    <molecule id="Q8CCP0-1"/>
    <property type="protein sequence ID" value="ENSMUSP00000021368.9"/>
    <property type="gene ID" value="ENSMUSG00000020982.10"/>
</dbReference>
<dbReference type="GeneID" id="66244"/>
<dbReference type="KEGG" id="mmu:66244"/>
<dbReference type="UCSC" id="uc007nse.2">
    <molecule id="Q8CCP0-1"/>
    <property type="organism name" value="mouse"/>
</dbReference>
<dbReference type="UCSC" id="uc007nsg.2">
    <molecule id="Q8CCP0-3"/>
    <property type="organism name" value="mouse"/>
</dbReference>
<dbReference type="UCSC" id="uc007nsh.2">
    <molecule id="Q8CCP0-4"/>
    <property type="organism name" value="mouse"/>
</dbReference>
<dbReference type="AGR" id="MGI:1918305"/>
<dbReference type="CTD" id="9147"/>
<dbReference type="MGI" id="MGI:1918305">
    <property type="gene designation" value="Nemf"/>
</dbReference>
<dbReference type="VEuPathDB" id="HostDB:ENSMUSG00000020982"/>
<dbReference type="eggNOG" id="KOG2030">
    <property type="taxonomic scope" value="Eukaryota"/>
</dbReference>
<dbReference type="GeneTree" id="ENSGT00390000018516"/>
<dbReference type="HOGENOM" id="CLU_003612_1_0_1"/>
<dbReference type="InParanoid" id="Q8CCP0"/>
<dbReference type="OMA" id="MFLEFFA"/>
<dbReference type="OrthoDB" id="207084at2759"/>
<dbReference type="PhylomeDB" id="Q8CCP0"/>
<dbReference type="TreeFam" id="TF300515"/>
<dbReference type="BioGRID-ORCS" id="66244">
    <property type="hits" value="4 hits in 78 CRISPR screens"/>
</dbReference>
<dbReference type="ChiTaRS" id="Nemf">
    <property type="organism name" value="mouse"/>
</dbReference>
<dbReference type="PRO" id="PR:Q8CCP0"/>
<dbReference type="Proteomes" id="UP000000589">
    <property type="component" value="Chromosome 12"/>
</dbReference>
<dbReference type="RNAct" id="Q8CCP0">
    <property type="molecule type" value="protein"/>
</dbReference>
<dbReference type="Bgee" id="ENSMUSG00000020982">
    <property type="expression patterns" value="Expressed in manus and 231 other cell types or tissues"/>
</dbReference>
<dbReference type="ExpressionAtlas" id="Q8CCP0">
    <property type="expression patterns" value="baseline and differential"/>
</dbReference>
<dbReference type="GO" id="GO:0005829">
    <property type="term" value="C:cytosol"/>
    <property type="evidence" value="ECO:0000250"/>
    <property type="project" value="UniProtKB"/>
</dbReference>
<dbReference type="GO" id="GO:0022626">
    <property type="term" value="C:cytosolic ribosome"/>
    <property type="evidence" value="ECO:0007669"/>
    <property type="project" value="Ensembl"/>
</dbReference>
<dbReference type="GO" id="GO:0005634">
    <property type="term" value="C:nucleus"/>
    <property type="evidence" value="ECO:0007669"/>
    <property type="project" value="UniProtKB-SubCell"/>
</dbReference>
<dbReference type="GO" id="GO:1990112">
    <property type="term" value="C:RQC complex"/>
    <property type="evidence" value="ECO:0000250"/>
    <property type="project" value="UniProtKB"/>
</dbReference>
<dbReference type="GO" id="GO:1904678">
    <property type="term" value="F:alpha-aminoacyl-tRNA binding"/>
    <property type="evidence" value="ECO:0007669"/>
    <property type="project" value="Ensembl"/>
</dbReference>
<dbReference type="GO" id="GO:0043023">
    <property type="term" value="F:ribosomal large subunit binding"/>
    <property type="evidence" value="ECO:0007669"/>
    <property type="project" value="Ensembl"/>
</dbReference>
<dbReference type="GO" id="GO:0140708">
    <property type="term" value="P:CAT tailing"/>
    <property type="evidence" value="ECO:0000314"/>
    <property type="project" value="UniProtKB"/>
</dbReference>
<dbReference type="GO" id="GO:0051168">
    <property type="term" value="P:nuclear export"/>
    <property type="evidence" value="ECO:0007669"/>
    <property type="project" value="Ensembl"/>
</dbReference>
<dbReference type="GO" id="GO:0065003">
    <property type="term" value="P:protein-containing complex assembly"/>
    <property type="evidence" value="ECO:0000250"/>
    <property type="project" value="UniProtKB"/>
</dbReference>
<dbReference type="GO" id="GO:1990116">
    <property type="term" value="P:ribosome-associated ubiquitin-dependent protein catabolic process"/>
    <property type="evidence" value="ECO:0000314"/>
    <property type="project" value="UniProtKB"/>
</dbReference>
<dbReference type="FunFam" id="2.30.310.10:FF:000001">
    <property type="entry name" value="Nuclear export mediator factor Nemf"/>
    <property type="match status" value="1"/>
</dbReference>
<dbReference type="Gene3D" id="2.30.310.10">
    <property type="entry name" value="ibrinogen binding protein from staphylococcus aureus domain"/>
    <property type="match status" value="1"/>
</dbReference>
<dbReference type="InterPro" id="IPR021846">
    <property type="entry name" value="NFACT-C"/>
</dbReference>
<dbReference type="InterPro" id="IPR008532">
    <property type="entry name" value="NFACT_RNA-bd"/>
</dbReference>
<dbReference type="InterPro" id="IPR051608">
    <property type="entry name" value="RQC_Subunit_NEMF"/>
</dbReference>
<dbReference type="PANTHER" id="PTHR15239">
    <property type="entry name" value="NUCLEAR EXPORT MEDIATOR FACTOR NEMF"/>
    <property type="match status" value="1"/>
</dbReference>
<dbReference type="PANTHER" id="PTHR15239:SF6">
    <property type="entry name" value="RIBOSOME QUALITY CONTROL COMPLEX SUBUNIT NEMF"/>
    <property type="match status" value="1"/>
</dbReference>
<dbReference type="Pfam" id="PF11923">
    <property type="entry name" value="NFACT-C"/>
    <property type="match status" value="1"/>
</dbReference>
<dbReference type="Pfam" id="PF05670">
    <property type="entry name" value="NFACT-R_1"/>
    <property type="match status" value="1"/>
</dbReference>
<dbReference type="Pfam" id="PF05833">
    <property type="entry name" value="NFACT_N"/>
    <property type="match status" value="1"/>
</dbReference>
<keyword id="KW-0025">Alternative splicing</keyword>
<keyword id="KW-0175">Coiled coil</keyword>
<keyword id="KW-0963">Cytoplasm</keyword>
<keyword id="KW-0539">Nucleus</keyword>
<keyword id="KW-0597">Phosphoprotein</keyword>
<keyword id="KW-1185">Reference proteome</keyword>